<feature type="chain" id="PRO_1000199273" description="Methionine--tRNA ligase">
    <location>
        <begin position="1"/>
        <end position="544"/>
    </location>
</feature>
<feature type="short sequence motif" description="'HIGH' region">
    <location>
        <begin position="10"/>
        <end position="20"/>
    </location>
</feature>
<feature type="short sequence motif" description="'KMSKS' region">
    <location>
        <begin position="329"/>
        <end position="333"/>
    </location>
</feature>
<feature type="binding site" evidence="1">
    <location>
        <position position="141"/>
    </location>
    <ligand>
        <name>Zn(2+)</name>
        <dbReference type="ChEBI" id="CHEBI:29105"/>
    </ligand>
</feature>
<feature type="binding site" evidence="1">
    <location>
        <position position="144"/>
    </location>
    <ligand>
        <name>Zn(2+)</name>
        <dbReference type="ChEBI" id="CHEBI:29105"/>
    </ligand>
</feature>
<feature type="binding site" evidence="1">
    <location>
        <position position="153"/>
    </location>
    <ligand>
        <name>Zn(2+)</name>
        <dbReference type="ChEBI" id="CHEBI:29105"/>
    </ligand>
</feature>
<feature type="binding site" evidence="1">
    <location>
        <position position="156"/>
    </location>
    <ligand>
        <name>Zn(2+)</name>
        <dbReference type="ChEBI" id="CHEBI:29105"/>
    </ligand>
</feature>
<feature type="binding site" evidence="1">
    <location>
        <position position="332"/>
    </location>
    <ligand>
        <name>ATP</name>
        <dbReference type="ChEBI" id="CHEBI:30616"/>
    </ligand>
</feature>
<proteinExistence type="inferred from homology"/>
<reference key="1">
    <citation type="submission" date="2008-10" db="EMBL/GenBank/DDBJ databases">
        <title>Genome sequence of Bacillus cereus AH187.</title>
        <authorList>
            <person name="Dodson R.J."/>
            <person name="Durkin A.S."/>
            <person name="Rosovitz M.J."/>
            <person name="Rasko D.A."/>
            <person name="Kolsto A.B."/>
            <person name="Okstad O.A."/>
            <person name="Ravel J."/>
            <person name="Sutton G."/>
        </authorList>
    </citation>
    <scope>NUCLEOTIDE SEQUENCE [LARGE SCALE GENOMIC DNA]</scope>
    <source>
        <strain>AH187</strain>
    </source>
</reference>
<accession>B7HVW2</accession>
<keyword id="KW-0030">Aminoacyl-tRNA synthetase</keyword>
<keyword id="KW-0067">ATP-binding</keyword>
<keyword id="KW-0963">Cytoplasm</keyword>
<keyword id="KW-0436">Ligase</keyword>
<keyword id="KW-0479">Metal-binding</keyword>
<keyword id="KW-0547">Nucleotide-binding</keyword>
<keyword id="KW-0648">Protein biosynthesis</keyword>
<keyword id="KW-0862">Zinc</keyword>
<dbReference type="EC" id="6.1.1.10" evidence="1"/>
<dbReference type="EMBL" id="CP001177">
    <property type="protein sequence ID" value="ACJ78819.1"/>
    <property type="molecule type" value="Genomic_DNA"/>
</dbReference>
<dbReference type="SMR" id="B7HVW2"/>
<dbReference type="KEGG" id="bcr:BCAH187_A5192"/>
<dbReference type="HOGENOM" id="CLU_009710_1_2_9"/>
<dbReference type="Proteomes" id="UP000002214">
    <property type="component" value="Chromosome"/>
</dbReference>
<dbReference type="GO" id="GO:0005829">
    <property type="term" value="C:cytosol"/>
    <property type="evidence" value="ECO:0007669"/>
    <property type="project" value="TreeGrafter"/>
</dbReference>
<dbReference type="GO" id="GO:0005524">
    <property type="term" value="F:ATP binding"/>
    <property type="evidence" value="ECO:0007669"/>
    <property type="project" value="UniProtKB-UniRule"/>
</dbReference>
<dbReference type="GO" id="GO:0046872">
    <property type="term" value="F:metal ion binding"/>
    <property type="evidence" value="ECO:0007669"/>
    <property type="project" value="UniProtKB-KW"/>
</dbReference>
<dbReference type="GO" id="GO:0004825">
    <property type="term" value="F:methionine-tRNA ligase activity"/>
    <property type="evidence" value="ECO:0007669"/>
    <property type="project" value="UniProtKB-UniRule"/>
</dbReference>
<dbReference type="GO" id="GO:0006431">
    <property type="term" value="P:methionyl-tRNA aminoacylation"/>
    <property type="evidence" value="ECO:0007669"/>
    <property type="project" value="UniProtKB-UniRule"/>
</dbReference>
<dbReference type="CDD" id="cd07957">
    <property type="entry name" value="Anticodon_Ia_Met"/>
    <property type="match status" value="1"/>
</dbReference>
<dbReference type="CDD" id="cd00814">
    <property type="entry name" value="MetRS_core"/>
    <property type="match status" value="1"/>
</dbReference>
<dbReference type="FunFam" id="1.10.730.10:FF:000041">
    <property type="entry name" value="Methionine--tRNA ligase"/>
    <property type="match status" value="1"/>
</dbReference>
<dbReference type="FunFam" id="2.20.28.20:FF:000001">
    <property type="entry name" value="Methionine--tRNA ligase"/>
    <property type="match status" value="1"/>
</dbReference>
<dbReference type="Gene3D" id="3.40.50.620">
    <property type="entry name" value="HUPs"/>
    <property type="match status" value="1"/>
</dbReference>
<dbReference type="Gene3D" id="1.10.730.10">
    <property type="entry name" value="Isoleucyl-tRNA Synthetase, Domain 1"/>
    <property type="match status" value="1"/>
</dbReference>
<dbReference type="Gene3D" id="2.20.28.20">
    <property type="entry name" value="Methionyl-tRNA synthetase, Zn-domain"/>
    <property type="match status" value="1"/>
</dbReference>
<dbReference type="HAMAP" id="MF_00098">
    <property type="entry name" value="Met_tRNA_synth_type1"/>
    <property type="match status" value="1"/>
</dbReference>
<dbReference type="InterPro" id="IPR001412">
    <property type="entry name" value="aa-tRNA-synth_I_CS"/>
</dbReference>
<dbReference type="InterPro" id="IPR041872">
    <property type="entry name" value="Anticodon_Met"/>
</dbReference>
<dbReference type="InterPro" id="IPR013155">
    <property type="entry name" value="M/V/L/I-tRNA-synth_anticd-bd"/>
</dbReference>
<dbReference type="InterPro" id="IPR023458">
    <property type="entry name" value="Met-tRNA_ligase_1"/>
</dbReference>
<dbReference type="InterPro" id="IPR014758">
    <property type="entry name" value="Met-tRNA_synth"/>
</dbReference>
<dbReference type="InterPro" id="IPR015413">
    <property type="entry name" value="Methionyl/Leucyl_tRNA_Synth"/>
</dbReference>
<dbReference type="InterPro" id="IPR033911">
    <property type="entry name" value="MetRS_core"/>
</dbReference>
<dbReference type="InterPro" id="IPR029038">
    <property type="entry name" value="MetRS_Zn"/>
</dbReference>
<dbReference type="InterPro" id="IPR014729">
    <property type="entry name" value="Rossmann-like_a/b/a_fold"/>
</dbReference>
<dbReference type="InterPro" id="IPR009080">
    <property type="entry name" value="tRNAsynth_Ia_anticodon-bd"/>
</dbReference>
<dbReference type="NCBIfam" id="TIGR00398">
    <property type="entry name" value="metG"/>
    <property type="match status" value="1"/>
</dbReference>
<dbReference type="NCBIfam" id="NF001100">
    <property type="entry name" value="PRK00133.1"/>
    <property type="match status" value="1"/>
</dbReference>
<dbReference type="PANTHER" id="PTHR45765">
    <property type="entry name" value="METHIONINE--TRNA LIGASE"/>
    <property type="match status" value="1"/>
</dbReference>
<dbReference type="PANTHER" id="PTHR45765:SF1">
    <property type="entry name" value="METHIONINE--TRNA LIGASE, CYTOPLASMIC"/>
    <property type="match status" value="1"/>
</dbReference>
<dbReference type="Pfam" id="PF08264">
    <property type="entry name" value="Anticodon_1"/>
    <property type="match status" value="1"/>
</dbReference>
<dbReference type="Pfam" id="PF09334">
    <property type="entry name" value="tRNA-synt_1g"/>
    <property type="match status" value="1"/>
</dbReference>
<dbReference type="PRINTS" id="PR01041">
    <property type="entry name" value="TRNASYNTHMET"/>
</dbReference>
<dbReference type="SUPFAM" id="SSF47323">
    <property type="entry name" value="Anticodon-binding domain of a subclass of class I aminoacyl-tRNA synthetases"/>
    <property type="match status" value="1"/>
</dbReference>
<dbReference type="SUPFAM" id="SSF57770">
    <property type="entry name" value="Methionyl-tRNA synthetase (MetRS), Zn-domain"/>
    <property type="match status" value="1"/>
</dbReference>
<dbReference type="SUPFAM" id="SSF52374">
    <property type="entry name" value="Nucleotidylyl transferase"/>
    <property type="match status" value="1"/>
</dbReference>
<dbReference type="PROSITE" id="PS00178">
    <property type="entry name" value="AA_TRNA_LIGASE_I"/>
    <property type="match status" value="1"/>
</dbReference>
<protein>
    <recommendedName>
        <fullName evidence="1">Methionine--tRNA ligase</fullName>
        <ecNumber evidence="1">6.1.1.10</ecNumber>
    </recommendedName>
    <alternativeName>
        <fullName evidence="1">Methionyl-tRNA synthetase</fullName>
        <shortName evidence="1">MetRS</shortName>
    </alternativeName>
</protein>
<name>SYM_BACC7</name>
<gene>
    <name evidence="1" type="primary">metG</name>
    <name type="ordered locus">BCAH187_A5192</name>
</gene>
<comment type="function">
    <text evidence="1">Is required not only for elongation of protein synthesis but also for the initiation of all mRNA translation through initiator tRNA(fMet) aminoacylation.</text>
</comment>
<comment type="catalytic activity">
    <reaction evidence="1">
        <text>tRNA(Met) + L-methionine + ATP = L-methionyl-tRNA(Met) + AMP + diphosphate</text>
        <dbReference type="Rhea" id="RHEA:13481"/>
        <dbReference type="Rhea" id="RHEA-COMP:9667"/>
        <dbReference type="Rhea" id="RHEA-COMP:9698"/>
        <dbReference type="ChEBI" id="CHEBI:30616"/>
        <dbReference type="ChEBI" id="CHEBI:33019"/>
        <dbReference type="ChEBI" id="CHEBI:57844"/>
        <dbReference type="ChEBI" id="CHEBI:78442"/>
        <dbReference type="ChEBI" id="CHEBI:78530"/>
        <dbReference type="ChEBI" id="CHEBI:456215"/>
        <dbReference type="EC" id="6.1.1.10"/>
    </reaction>
</comment>
<comment type="cofactor">
    <cofactor evidence="1">
        <name>Zn(2+)</name>
        <dbReference type="ChEBI" id="CHEBI:29105"/>
    </cofactor>
    <text evidence="1">Binds 1 zinc ion per subunit.</text>
</comment>
<comment type="subunit">
    <text evidence="1">Monomer.</text>
</comment>
<comment type="subcellular location">
    <subcellularLocation>
        <location evidence="1">Cytoplasm</location>
    </subcellularLocation>
</comment>
<comment type="similarity">
    <text evidence="1">Belongs to the class-I aminoacyl-tRNA synthetase family. MetG type 1 subfamily.</text>
</comment>
<evidence type="ECO:0000255" key="1">
    <source>
        <dbReference type="HAMAP-Rule" id="MF_00098"/>
    </source>
</evidence>
<sequence>MSIFIGGAWPYANGSLHLGHIASLLPGDILARYYRAKGENVLYVSGSDCNGTPIAIRAKQEGVTAKDIADQYHEEFERCFRSLGFTYDCYTRTDSEHHHETVQNVFLRLLEEGHIYKKTVEQAYCETCTQFLPDRYVEGICPHCHEAARGDQCDACSAILDPLDLLEKKCKLCGSTPSVQETEHFYFALHTFQEQIKTAVENVKQTGTWRDNAIQLTERYVKEGLQDRAVSRDLPIGVPIPVEGYEDKKIYVWIEAVTGYYSASKHWAEKTGEDDQEFWDSEAKTYYVHGKDNIPFHSVIWPAVLLGIGEGAIPRHIVSNEYLTVEKRKLSTSKNWAVWVPDILERYDPDSIRYFLTVNAPENRDTDFSWREFLYSHNSELLGAYGNFVNRTLKFIEKYYGGIVPKGSIDVELKDKVEGLYKHVGEAIEQTKFKVALESIFDAVRFANKYFDEKQPWKQREDNPVSCEETIYNCVYLIANFVNLLEPFLPFSSERIRNTLSIVNRNWEPQHTLPSRIDSVQPLFERIDVKQIEHEVEKLYGAVK</sequence>
<organism>
    <name type="scientific">Bacillus cereus (strain AH187)</name>
    <dbReference type="NCBI Taxonomy" id="405534"/>
    <lineage>
        <taxon>Bacteria</taxon>
        <taxon>Bacillati</taxon>
        <taxon>Bacillota</taxon>
        <taxon>Bacilli</taxon>
        <taxon>Bacillales</taxon>
        <taxon>Bacillaceae</taxon>
        <taxon>Bacillus</taxon>
        <taxon>Bacillus cereus group</taxon>
    </lineage>
</organism>